<reference key="1">
    <citation type="journal article" date="2005" name="BMC Biol.">
        <title>The sequence of rice chromosomes 11 and 12, rich in disease resistance genes and recent gene duplications.</title>
        <authorList>
            <consortium name="The rice chromosomes 11 and 12 sequencing consortia"/>
        </authorList>
    </citation>
    <scope>NUCLEOTIDE SEQUENCE [LARGE SCALE GENOMIC DNA]</scope>
    <source>
        <strain>cv. Nipponbare</strain>
    </source>
</reference>
<reference key="2">
    <citation type="journal article" date="2005" name="Nature">
        <title>The map-based sequence of the rice genome.</title>
        <authorList>
            <consortium name="International rice genome sequencing project (IRGSP)"/>
        </authorList>
    </citation>
    <scope>NUCLEOTIDE SEQUENCE [LARGE SCALE GENOMIC DNA]</scope>
    <source>
        <strain>cv. Nipponbare</strain>
    </source>
</reference>
<reference key="3">
    <citation type="journal article" date="2008" name="Nucleic Acids Res.">
        <title>The rice annotation project database (RAP-DB): 2008 update.</title>
        <authorList>
            <consortium name="The rice annotation project (RAP)"/>
        </authorList>
    </citation>
    <scope>GENOME REANNOTATION</scope>
    <source>
        <strain>cv. Nipponbare</strain>
    </source>
</reference>
<reference key="4">
    <citation type="journal article" date="2013" name="Rice">
        <title>Improvement of the Oryza sativa Nipponbare reference genome using next generation sequence and optical map data.</title>
        <authorList>
            <person name="Kawahara Y."/>
            <person name="de la Bastide M."/>
            <person name="Hamilton J.P."/>
            <person name="Kanamori H."/>
            <person name="McCombie W.R."/>
            <person name="Ouyang S."/>
            <person name="Schwartz D.C."/>
            <person name="Tanaka T."/>
            <person name="Wu J."/>
            <person name="Zhou S."/>
            <person name="Childs K.L."/>
            <person name="Davidson R.M."/>
            <person name="Lin H."/>
            <person name="Quesada-Ocampo L."/>
            <person name="Vaillancourt B."/>
            <person name="Sakai H."/>
            <person name="Lee S.S."/>
            <person name="Kim J."/>
            <person name="Numa H."/>
            <person name="Itoh T."/>
            <person name="Buell C.R."/>
            <person name="Matsumoto T."/>
        </authorList>
    </citation>
    <scope>GENOME REANNOTATION</scope>
    <source>
        <strain>cv. Nipponbare</strain>
    </source>
</reference>
<reference key="5">
    <citation type="journal article" date="2003" name="Science">
        <title>Collection, mapping, and annotation of over 28,000 cDNA clones from japonica rice.</title>
        <authorList>
            <consortium name="The rice full-length cDNA consortium"/>
        </authorList>
    </citation>
    <scope>NUCLEOTIDE SEQUENCE [LARGE SCALE MRNA] OF 50-454</scope>
    <source>
        <strain>cv. Nipponbare</strain>
    </source>
</reference>
<reference key="6">
    <citation type="journal article" date="2004" name="Plant Physiol.">
        <title>Calcium sensors and their interacting protein kinases: genomics of the Arabidopsis and rice CBL-CIPK signaling networks.</title>
        <authorList>
            <person name="Kolukisaoglu U."/>
            <person name="Weinl S."/>
            <person name="Blazevic D."/>
            <person name="Batistic O."/>
            <person name="Kudla J."/>
        </authorList>
    </citation>
    <scope>GENE FAMILY</scope>
    <scope>NOMENCLATURE</scope>
</reference>
<protein>
    <recommendedName>
        <fullName>CBL-interacting protein kinase 33</fullName>
        <ecNumber>2.7.11.1</ecNumber>
    </recommendedName>
    <alternativeName>
        <fullName>OsCIPK33</fullName>
    </alternativeName>
</protein>
<organism>
    <name type="scientific">Oryza sativa subsp. japonica</name>
    <name type="common">Rice</name>
    <dbReference type="NCBI Taxonomy" id="39947"/>
    <lineage>
        <taxon>Eukaryota</taxon>
        <taxon>Viridiplantae</taxon>
        <taxon>Streptophyta</taxon>
        <taxon>Embryophyta</taxon>
        <taxon>Tracheophyta</taxon>
        <taxon>Spermatophyta</taxon>
        <taxon>Magnoliopsida</taxon>
        <taxon>Liliopsida</taxon>
        <taxon>Poales</taxon>
        <taxon>Poaceae</taxon>
        <taxon>BOP clade</taxon>
        <taxon>Oryzoideae</taxon>
        <taxon>Oryzeae</taxon>
        <taxon>Oryzinae</taxon>
        <taxon>Oryza</taxon>
        <taxon>Oryza sativa</taxon>
    </lineage>
</organism>
<dbReference type="EC" id="2.7.11.1"/>
<dbReference type="EMBL" id="DP000010">
    <property type="protein sequence ID" value="ABA91407.1"/>
    <property type="molecule type" value="Genomic_DNA"/>
</dbReference>
<dbReference type="EMBL" id="AP008217">
    <property type="protein sequence ID" value="BAF27520.1"/>
    <property type="status" value="ALT_INIT"/>
    <property type="molecule type" value="Genomic_DNA"/>
</dbReference>
<dbReference type="EMBL" id="AP014967">
    <property type="status" value="NOT_ANNOTATED_CDS"/>
    <property type="molecule type" value="Genomic_DNA"/>
</dbReference>
<dbReference type="EMBL" id="AK112043">
    <property type="status" value="NOT_ANNOTATED_CDS"/>
    <property type="molecule type" value="mRNA"/>
</dbReference>
<dbReference type="RefSeq" id="XP_015617151.1">
    <property type="nucleotide sequence ID" value="XM_015761665.1"/>
</dbReference>
<dbReference type="RefSeq" id="XP_015617152.1">
    <property type="nucleotide sequence ID" value="XM_015761666.1"/>
</dbReference>
<dbReference type="SMR" id="Q2RAX3"/>
<dbReference type="FunCoup" id="Q2RAX3">
    <property type="interactions" value="544"/>
</dbReference>
<dbReference type="STRING" id="39947.Q2RAX3"/>
<dbReference type="PaxDb" id="39947-Q2RAX3"/>
<dbReference type="KEGG" id="dosa:Os11g0134300"/>
<dbReference type="eggNOG" id="KOG0583">
    <property type="taxonomic scope" value="Eukaryota"/>
</dbReference>
<dbReference type="HOGENOM" id="CLU_000288_59_0_1"/>
<dbReference type="InParanoid" id="Q2RAX3"/>
<dbReference type="OrthoDB" id="193931at2759"/>
<dbReference type="Proteomes" id="UP000000763">
    <property type="component" value="Chromosome 11"/>
</dbReference>
<dbReference type="Proteomes" id="UP000059680">
    <property type="component" value="Chromosome 11"/>
</dbReference>
<dbReference type="GO" id="GO:0005524">
    <property type="term" value="F:ATP binding"/>
    <property type="evidence" value="ECO:0007669"/>
    <property type="project" value="UniProtKB-KW"/>
</dbReference>
<dbReference type="GO" id="GO:0106310">
    <property type="term" value="F:protein serine kinase activity"/>
    <property type="evidence" value="ECO:0007669"/>
    <property type="project" value="RHEA"/>
</dbReference>
<dbReference type="GO" id="GO:0004674">
    <property type="term" value="F:protein serine/threonine kinase activity"/>
    <property type="evidence" value="ECO:0000318"/>
    <property type="project" value="GO_Central"/>
</dbReference>
<dbReference type="GO" id="GO:0007165">
    <property type="term" value="P:signal transduction"/>
    <property type="evidence" value="ECO:0007669"/>
    <property type="project" value="InterPro"/>
</dbReference>
<dbReference type="CDD" id="cd12195">
    <property type="entry name" value="CIPK_C"/>
    <property type="match status" value="1"/>
</dbReference>
<dbReference type="CDD" id="cd14663">
    <property type="entry name" value="STKc_SnRK3"/>
    <property type="match status" value="1"/>
</dbReference>
<dbReference type="FunFam" id="1.10.510.10:FF:000279">
    <property type="entry name" value="Non-specific serine/threonine protein kinase"/>
    <property type="match status" value="1"/>
</dbReference>
<dbReference type="FunFam" id="3.30.200.20:FF:000096">
    <property type="entry name" value="Non-specific serine/threonine protein kinase"/>
    <property type="match status" value="1"/>
</dbReference>
<dbReference type="FunFam" id="3.30.310.80:FF:000002">
    <property type="entry name" value="Non-specific serine/threonine protein kinase"/>
    <property type="match status" value="1"/>
</dbReference>
<dbReference type="Gene3D" id="3.30.310.80">
    <property type="entry name" value="Kinase associated domain 1, KA1"/>
    <property type="match status" value="1"/>
</dbReference>
<dbReference type="Gene3D" id="3.30.200.20">
    <property type="entry name" value="Phosphorylase Kinase, domain 1"/>
    <property type="match status" value="1"/>
</dbReference>
<dbReference type="Gene3D" id="1.10.510.10">
    <property type="entry name" value="Transferase(Phosphotransferase) domain 1"/>
    <property type="match status" value="1"/>
</dbReference>
<dbReference type="InterPro" id="IPR011009">
    <property type="entry name" value="Kinase-like_dom_sf"/>
</dbReference>
<dbReference type="InterPro" id="IPR018451">
    <property type="entry name" value="NAF/FISL_domain"/>
</dbReference>
<dbReference type="InterPro" id="IPR004041">
    <property type="entry name" value="NAF_dom"/>
</dbReference>
<dbReference type="InterPro" id="IPR000719">
    <property type="entry name" value="Prot_kinase_dom"/>
</dbReference>
<dbReference type="InterPro" id="IPR017441">
    <property type="entry name" value="Protein_kinase_ATP_BS"/>
</dbReference>
<dbReference type="InterPro" id="IPR008271">
    <property type="entry name" value="Ser/Thr_kinase_AS"/>
</dbReference>
<dbReference type="PANTHER" id="PTHR43895">
    <property type="entry name" value="CALCIUM/CALMODULIN-DEPENDENT PROTEIN KINASE KINASE-RELATED"/>
    <property type="match status" value="1"/>
</dbReference>
<dbReference type="PANTHER" id="PTHR43895:SF104">
    <property type="entry name" value="CBL-INTERACTING SERINE_THREONINE-PROTEIN KINASE 3"/>
    <property type="match status" value="1"/>
</dbReference>
<dbReference type="Pfam" id="PF03822">
    <property type="entry name" value="NAF"/>
    <property type="match status" value="1"/>
</dbReference>
<dbReference type="Pfam" id="PF00069">
    <property type="entry name" value="Pkinase"/>
    <property type="match status" value="1"/>
</dbReference>
<dbReference type="SMART" id="SM00220">
    <property type="entry name" value="S_TKc"/>
    <property type="match status" value="1"/>
</dbReference>
<dbReference type="SUPFAM" id="SSF56112">
    <property type="entry name" value="Protein kinase-like (PK-like)"/>
    <property type="match status" value="1"/>
</dbReference>
<dbReference type="PROSITE" id="PS50816">
    <property type="entry name" value="NAF"/>
    <property type="match status" value="1"/>
</dbReference>
<dbReference type="PROSITE" id="PS00107">
    <property type="entry name" value="PROTEIN_KINASE_ATP"/>
    <property type="match status" value="1"/>
</dbReference>
<dbReference type="PROSITE" id="PS50011">
    <property type="entry name" value="PROTEIN_KINASE_DOM"/>
    <property type="match status" value="1"/>
</dbReference>
<dbReference type="PROSITE" id="PS00108">
    <property type="entry name" value="PROTEIN_KINASE_ST"/>
    <property type="match status" value="1"/>
</dbReference>
<evidence type="ECO:0000250" key="1"/>
<evidence type="ECO:0000255" key="2">
    <source>
        <dbReference type="PROSITE-ProRule" id="PRU00159"/>
    </source>
</evidence>
<evidence type="ECO:0000255" key="3">
    <source>
        <dbReference type="PROSITE-ProRule" id="PRU00256"/>
    </source>
</evidence>
<evidence type="ECO:0000255" key="4">
    <source>
        <dbReference type="PROSITE-ProRule" id="PRU10027"/>
    </source>
</evidence>
<evidence type="ECO:0000305" key="5"/>
<feature type="chain" id="PRO_0000338390" description="CBL-interacting protein kinase 33">
    <location>
        <begin position="1"/>
        <end position="454"/>
    </location>
</feature>
<feature type="domain" description="Protein kinase" evidence="2">
    <location>
        <begin position="13"/>
        <end position="268"/>
    </location>
</feature>
<feature type="domain" description="NAF" evidence="3">
    <location>
        <begin position="305"/>
        <end position="329"/>
    </location>
</feature>
<feature type="region of interest" description="Activation loop" evidence="1">
    <location>
        <begin position="154"/>
        <end position="183"/>
    </location>
</feature>
<feature type="region of interest" description="PPI" evidence="1">
    <location>
        <begin position="335"/>
        <end position="364"/>
    </location>
</feature>
<feature type="active site" description="Proton acceptor" evidence="2 4">
    <location>
        <position position="136"/>
    </location>
</feature>
<feature type="binding site" evidence="2">
    <location>
        <begin position="19"/>
        <end position="27"/>
    </location>
    <ligand>
        <name>ATP</name>
        <dbReference type="ChEBI" id="CHEBI:30616"/>
    </ligand>
</feature>
<feature type="binding site" evidence="2">
    <location>
        <position position="42"/>
    </location>
    <ligand>
        <name>ATP</name>
        <dbReference type="ChEBI" id="CHEBI:30616"/>
    </ligand>
</feature>
<sequence>MSTTKVKRRVGKYELGRTIGEGTFAKVKFARDTETGDPVAIKILDKEKVLKHKMVEQIKREISTMKLIKHPNVVRIYEVMGSKTNIYIVLEYVTGGELFDTIVNHGRMREDEARRYFQQLINAVDYCHSRGVYHRDLKPENLLLDSYGNLKVSDFGLSALSQQIKDDGLLHTTCGTPNYVAPEVLEDQGYDGAMADLWSCGVILFVLLAGYLPFEDSNLMTLYKKISNAEFTFPPWTSFPAKRLLTRILDPNPMTRITIPEILEDEWFKKGYKRPEFDEKYDTTLDDVDAVFNDSEEHHVTEKKEEPEALNAFELISMSAGLNLGNLFDSEQEFKRETRFTSKCPPKEIVRKIEEAAKPLGFDVQKKNYKICSPCLTTICMNIPFKLRLEKVKAGRKGNLNVATEILQVAPSLHMVEVRKAKGDTLEFHKFYKNLSRTLKDVVWKSDDLQNQLS</sequence>
<name>CIPKX_ORYSJ</name>
<gene>
    <name type="primary">CIPK33</name>
    <name type="ordered locus">Os11g0134300</name>
    <name type="ordered locus">LOC_Os11g03970</name>
</gene>
<accession>Q2RAX3</accession>
<accession>Q0IUU5</accession>
<proteinExistence type="evidence at transcript level"/>
<comment type="function">
    <text evidence="1">CIPK serine-threonine protein kinases interact with CBL proteins. Binding of a CBL protein to the regulatory NAF domain of CIPK protein lead to the activation of the kinase in a calcium-dependent manner (By similarity).</text>
</comment>
<comment type="catalytic activity">
    <reaction>
        <text>L-seryl-[protein] + ATP = O-phospho-L-seryl-[protein] + ADP + H(+)</text>
        <dbReference type="Rhea" id="RHEA:17989"/>
        <dbReference type="Rhea" id="RHEA-COMP:9863"/>
        <dbReference type="Rhea" id="RHEA-COMP:11604"/>
        <dbReference type="ChEBI" id="CHEBI:15378"/>
        <dbReference type="ChEBI" id="CHEBI:29999"/>
        <dbReference type="ChEBI" id="CHEBI:30616"/>
        <dbReference type="ChEBI" id="CHEBI:83421"/>
        <dbReference type="ChEBI" id="CHEBI:456216"/>
        <dbReference type="EC" id="2.7.11.1"/>
    </reaction>
</comment>
<comment type="catalytic activity">
    <reaction>
        <text>L-threonyl-[protein] + ATP = O-phospho-L-threonyl-[protein] + ADP + H(+)</text>
        <dbReference type="Rhea" id="RHEA:46608"/>
        <dbReference type="Rhea" id="RHEA-COMP:11060"/>
        <dbReference type="Rhea" id="RHEA-COMP:11605"/>
        <dbReference type="ChEBI" id="CHEBI:15378"/>
        <dbReference type="ChEBI" id="CHEBI:30013"/>
        <dbReference type="ChEBI" id="CHEBI:30616"/>
        <dbReference type="ChEBI" id="CHEBI:61977"/>
        <dbReference type="ChEBI" id="CHEBI:456216"/>
        <dbReference type="EC" id="2.7.11.1"/>
    </reaction>
</comment>
<comment type="cofactor">
    <cofactor evidence="1">
        <name>Mn(2+)</name>
        <dbReference type="ChEBI" id="CHEBI:29035"/>
    </cofactor>
</comment>
<comment type="domain">
    <text evidence="1">The activation loop within the kinase domain is the target of phosphorylation/activation by upstream protein kinases. The PPI motif mediates the interaction with the ABI (abscisic acid-insensitive) phosphatases (By similarity).</text>
</comment>
<comment type="similarity">
    <text evidence="5">Belongs to the protein kinase superfamily. CAMK Ser/Thr protein kinase family. SNF1 subfamily.</text>
</comment>
<comment type="sequence caution" evidence="5">
    <conflict type="erroneous initiation">
        <sequence resource="EMBL-CDS" id="BAF27520"/>
    </conflict>
</comment>
<keyword id="KW-0067">ATP-binding</keyword>
<keyword id="KW-0418">Kinase</keyword>
<keyword id="KW-0464">Manganese</keyword>
<keyword id="KW-0547">Nucleotide-binding</keyword>
<keyword id="KW-1185">Reference proteome</keyword>
<keyword id="KW-0723">Serine/threonine-protein kinase</keyword>
<keyword id="KW-0808">Transferase</keyword>